<feature type="chain" id="PRO_0000059999" description="Sulfate transport system permease protein CysW">
    <location>
        <begin position="1"/>
        <end position="286"/>
    </location>
</feature>
<feature type="transmembrane region" description="Helical" evidence="2">
    <location>
        <begin position="20"/>
        <end position="40"/>
    </location>
</feature>
<feature type="transmembrane region" description="Helical" evidence="2">
    <location>
        <begin position="74"/>
        <end position="94"/>
    </location>
</feature>
<feature type="transmembrane region" description="Helical" evidence="2">
    <location>
        <begin position="108"/>
        <end position="128"/>
    </location>
</feature>
<feature type="transmembrane region" description="Helical" evidence="2">
    <location>
        <begin position="145"/>
        <end position="165"/>
    </location>
</feature>
<feature type="transmembrane region" description="Helical" evidence="2">
    <location>
        <begin position="207"/>
        <end position="227"/>
    </location>
</feature>
<feature type="transmembrane region" description="Helical" evidence="2">
    <location>
        <begin position="255"/>
        <end position="275"/>
    </location>
</feature>
<feature type="domain" description="ABC transmembrane type-1" evidence="2">
    <location>
        <begin position="69"/>
        <end position="272"/>
    </location>
</feature>
<accession>P27370</accession>
<accession>Q31MK4</accession>
<name>CYSW_SYNE7</name>
<dbReference type="EMBL" id="M65247">
    <property type="protein sequence ID" value="AAA73047.1"/>
    <property type="molecule type" value="Genomic_DNA"/>
</dbReference>
<dbReference type="EMBL" id="CP000100">
    <property type="protein sequence ID" value="ABB57715.1"/>
    <property type="molecule type" value="Genomic_DNA"/>
</dbReference>
<dbReference type="RefSeq" id="WP_011244715.1">
    <property type="nucleotide sequence ID" value="NZ_JACJTX010000001.1"/>
</dbReference>
<dbReference type="SMR" id="P27370"/>
<dbReference type="STRING" id="1140.Synpcc7942_1685"/>
<dbReference type="PaxDb" id="1140-Synpcc7942_1685"/>
<dbReference type="GeneID" id="72430555"/>
<dbReference type="KEGG" id="syf:Synpcc7942_1685"/>
<dbReference type="eggNOG" id="COG4208">
    <property type="taxonomic scope" value="Bacteria"/>
</dbReference>
<dbReference type="HOGENOM" id="CLU_016047_14_0_3"/>
<dbReference type="OrthoDB" id="9774448at2"/>
<dbReference type="BioCyc" id="SYNEL:SYNPCC7942_1685-MONOMER"/>
<dbReference type="Proteomes" id="UP000889800">
    <property type="component" value="Chromosome"/>
</dbReference>
<dbReference type="GO" id="GO:0005886">
    <property type="term" value="C:plasma membrane"/>
    <property type="evidence" value="ECO:0007669"/>
    <property type="project" value="UniProtKB-SubCell"/>
</dbReference>
<dbReference type="GO" id="GO:0015419">
    <property type="term" value="F:ABC-type sulfate transporter activity"/>
    <property type="evidence" value="ECO:0007669"/>
    <property type="project" value="InterPro"/>
</dbReference>
<dbReference type="CDD" id="cd06261">
    <property type="entry name" value="TM_PBP2"/>
    <property type="match status" value="1"/>
</dbReference>
<dbReference type="Gene3D" id="1.10.3720.10">
    <property type="entry name" value="MetI-like"/>
    <property type="match status" value="1"/>
</dbReference>
<dbReference type="InterPro" id="IPR011866">
    <property type="entry name" value="CysW_permease"/>
</dbReference>
<dbReference type="InterPro" id="IPR000515">
    <property type="entry name" value="MetI-like"/>
</dbReference>
<dbReference type="InterPro" id="IPR035906">
    <property type="entry name" value="MetI-like_sf"/>
</dbReference>
<dbReference type="InterPro" id="IPR005667">
    <property type="entry name" value="Sulph_transpt2"/>
</dbReference>
<dbReference type="NCBIfam" id="TIGR00969">
    <property type="entry name" value="3a0106s02"/>
    <property type="match status" value="1"/>
</dbReference>
<dbReference type="NCBIfam" id="TIGR02140">
    <property type="entry name" value="permease_CysW"/>
    <property type="match status" value="1"/>
</dbReference>
<dbReference type="PANTHER" id="PTHR30406">
    <property type="entry name" value="SULFATE TRANSPORT SYSTEM PERMEASE PROTEIN"/>
    <property type="match status" value="1"/>
</dbReference>
<dbReference type="PANTHER" id="PTHR30406:SF1">
    <property type="entry name" value="SULFATE TRANSPORT SYSTEM PERMEASE PROTEIN CYSW"/>
    <property type="match status" value="1"/>
</dbReference>
<dbReference type="Pfam" id="PF00528">
    <property type="entry name" value="BPD_transp_1"/>
    <property type="match status" value="1"/>
</dbReference>
<dbReference type="SUPFAM" id="SSF161098">
    <property type="entry name" value="MetI-like"/>
    <property type="match status" value="1"/>
</dbReference>
<dbReference type="PROSITE" id="PS50928">
    <property type="entry name" value="ABC_TM1"/>
    <property type="match status" value="1"/>
</dbReference>
<sequence length="286" mass="30671">MVAFVKARRQIAGVKESKSLLPLALIGISLLYVGLIIIIPAANVAVQAFSEGLSGFIKNLGDRNLQEAIRLTLLMGVISVPLNTLFGLAAAFAIARKQFPGKSLLLSVIDLPFSISPVVAGLMIVLLYGRNGWLGPLLESNDIKIIFAWPGMALATIFVSMPFVAREVIPNLEEIGTDAEEAASTLGANGWQTFWRVTLPSIKWSMLYGVVLTTARALGEFGAVSVVSGSITGKTQTLPLFVEEAYKQYQTTLSYTAALLLGGISLVTLVLKALLEARTGRQSRIH</sequence>
<keyword id="KW-0997">Cell inner membrane</keyword>
<keyword id="KW-1003">Cell membrane</keyword>
<keyword id="KW-0472">Membrane</keyword>
<keyword id="KW-1185">Reference proteome</keyword>
<keyword id="KW-0346">Stress response</keyword>
<keyword id="KW-0764">Sulfate transport</keyword>
<keyword id="KW-0812">Transmembrane</keyword>
<keyword id="KW-1133">Transmembrane helix</keyword>
<keyword id="KW-0813">Transport</keyword>
<comment type="function">
    <text evidence="1">Part of the ABC transporter complex CysAWTP (TC 3.A.1.6.1) involved in sulfate/thiosulfate import. Probably responsible for the translocation of the substrate across the membrane (By similarity).</text>
</comment>
<comment type="subunit">
    <text evidence="3">The complex is composed of two ATP-binding proteins (CysA), two transmembrane proteins (CysT and CysW) and a solute-binding protein (CysP).</text>
</comment>
<comment type="subcellular location">
    <subcellularLocation>
        <location evidence="3">Cell inner membrane</location>
        <topology evidence="2">Multi-pass membrane protein</topology>
    </subcellularLocation>
</comment>
<comment type="induction">
    <text>By sulfur deprivation.</text>
</comment>
<comment type="similarity">
    <text evidence="3">Belongs to the binding-protein-dependent transport system permease family. CysTW subfamily.</text>
</comment>
<protein>
    <recommendedName>
        <fullName>Sulfate transport system permease protein CysW</fullName>
    </recommendedName>
</protein>
<reference key="1">
    <citation type="journal article" date="1991" name="J. Bacteriol.">
        <title>Characterization and mutagenesis of sulfur-regulated genes in a cyanobacterium: evidence for function in sulfate transport.</title>
        <authorList>
            <person name="Laudenbach D.E."/>
            <person name="Grossman A.R."/>
        </authorList>
    </citation>
    <scope>NUCLEOTIDE SEQUENCE [GENOMIC DNA]</scope>
</reference>
<reference key="2">
    <citation type="submission" date="2005-08" db="EMBL/GenBank/DDBJ databases">
        <title>Complete sequence of chromosome 1 of Synechococcus elongatus PCC 7942.</title>
        <authorList>
            <consortium name="US DOE Joint Genome Institute"/>
            <person name="Copeland A."/>
            <person name="Lucas S."/>
            <person name="Lapidus A."/>
            <person name="Barry K."/>
            <person name="Detter J.C."/>
            <person name="Glavina T."/>
            <person name="Hammon N."/>
            <person name="Israni S."/>
            <person name="Pitluck S."/>
            <person name="Schmutz J."/>
            <person name="Larimer F."/>
            <person name="Land M."/>
            <person name="Kyrpides N."/>
            <person name="Lykidis A."/>
            <person name="Golden S."/>
            <person name="Richardson P."/>
        </authorList>
    </citation>
    <scope>NUCLEOTIDE SEQUENCE [LARGE SCALE GENOMIC DNA]</scope>
    <source>
        <strain>ATCC 33912 / PCC 7942 / FACHB-805</strain>
    </source>
</reference>
<evidence type="ECO:0000250" key="1"/>
<evidence type="ECO:0000255" key="2">
    <source>
        <dbReference type="PROSITE-ProRule" id="PRU00441"/>
    </source>
</evidence>
<evidence type="ECO:0000305" key="3"/>
<gene>
    <name type="primary">cysW</name>
    <name type="ordered locus">Synpcc7942_1685</name>
</gene>
<organism>
    <name type="scientific">Synechococcus elongatus (strain ATCC 33912 / PCC 7942 / FACHB-805)</name>
    <name type="common">Anacystis nidulans R2</name>
    <dbReference type="NCBI Taxonomy" id="1140"/>
    <lineage>
        <taxon>Bacteria</taxon>
        <taxon>Bacillati</taxon>
        <taxon>Cyanobacteriota</taxon>
        <taxon>Cyanophyceae</taxon>
        <taxon>Synechococcales</taxon>
        <taxon>Synechococcaceae</taxon>
        <taxon>Synechococcus</taxon>
    </lineage>
</organism>
<proteinExistence type="evidence at transcript level"/>